<reference key="1">
    <citation type="submission" date="2003-02" db="EMBL/GenBank/DDBJ databases">
        <title>Parsing out signal and noise for seed-plant phylogenetic inference.</title>
        <authorList>
            <person name="Graham S.W."/>
            <person name="Rai H.S."/>
            <person name="Ikegami K."/>
            <person name="Reeves P.A."/>
            <person name="Olmstead R.G."/>
        </authorList>
    </citation>
    <scope>NUCLEOTIDE SEQUENCE [GENOMIC DNA]</scope>
</reference>
<evidence type="ECO:0000250" key="1"/>
<evidence type="ECO:0000305" key="2"/>
<sequence>MSRRGTAKEKTAKSDPIYRNRLVNMLVNRILKHGKKSLAYQIIYRAMKKIQQKTETNPLSVLRQAIRGVTPDIAVKARRVGGSTHQVPIEIGSTQGKALAIRWLLAASRKRPGRNMAFKLSSELVDAAKGSGEAIRKKEXTHRMAEANRAFAHFR</sequence>
<protein>
    <recommendedName>
        <fullName evidence="2">Small ribosomal subunit protein uS7c</fullName>
    </recommendedName>
    <alternativeName>
        <fullName>30S ribosomal protein S7, chloroplastic</fullName>
    </alternativeName>
</protein>
<accession>Q6EM56</accession>
<feature type="chain" id="PRO_0000124511" description="Small ribosomal subunit protein uS7c">
    <location>
        <begin position="1"/>
        <end position="155"/>
    </location>
</feature>
<geneLocation type="chloroplast"/>
<dbReference type="EMBL" id="AY237150">
    <property type="protein sequence ID" value="AAQ64585.1"/>
    <property type="molecule type" value="Genomic_DNA"/>
</dbReference>
<dbReference type="GO" id="GO:0009507">
    <property type="term" value="C:chloroplast"/>
    <property type="evidence" value="ECO:0007669"/>
    <property type="project" value="UniProtKB-SubCell"/>
</dbReference>
<dbReference type="GO" id="GO:0015935">
    <property type="term" value="C:small ribosomal subunit"/>
    <property type="evidence" value="ECO:0007669"/>
    <property type="project" value="InterPro"/>
</dbReference>
<dbReference type="GO" id="GO:0019843">
    <property type="term" value="F:rRNA binding"/>
    <property type="evidence" value="ECO:0007669"/>
    <property type="project" value="UniProtKB-UniRule"/>
</dbReference>
<dbReference type="GO" id="GO:0003735">
    <property type="term" value="F:structural constituent of ribosome"/>
    <property type="evidence" value="ECO:0007669"/>
    <property type="project" value="InterPro"/>
</dbReference>
<dbReference type="GO" id="GO:0006412">
    <property type="term" value="P:translation"/>
    <property type="evidence" value="ECO:0007669"/>
    <property type="project" value="UniProtKB-UniRule"/>
</dbReference>
<dbReference type="CDD" id="cd14871">
    <property type="entry name" value="uS7_Chloroplast"/>
    <property type="match status" value="1"/>
</dbReference>
<dbReference type="FunFam" id="1.10.455.10:FF:000001">
    <property type="entry name" value="30S ribosomal protein S7"/>
    <property type="match status" value="1"/>
</dbReference>
<dbReference type="Gene3D" id="1.10.455.10">
    <property type="entry name" value="Ribosomal protein S7 domain"/>
    <property type="match status" value="1"/>
</dbReference>
<dbReference type="HAMAP" id="MF_00480_B">
    <property type="entry name" value="Ribosomal_uS7_B"/>
    <property type="match status" value="1"/>
</dbReference>
<dbReference type="InterPro" id="IPR000235">
    <property type="entry name" value="Ribosomal_uS7"/>
</dbReference>
<dbReference type="InterPro" id="IPR005717">
    <property type="entry name" value="Ribosomal_uS7_bac/org-type"/>
</dbReference>
<dbReference type="InterPro" id="IPR020606">
    <property type="entry name" value="Ribosomal_uS7_CS"/>
</dbReference>
<dbReference type="InterPro" id="IPR023798">
    <property type="entry name" value="Ribosomal_uS7_dom"/>
</dbReference>
<dbReference type="InterPro" id="IPR036823">
    <property type="entry name" value="Ribosomal_uS7_dom_sf"/>
</dbReference>
<dbReference type="NCBIfam" id="TIGR01029">
    <property type="entry name" value="rpsG_bact"/>
    <property type="match status" value="1"/>
</dbReference>
<dbReference type="PANTHER" id="PTHR11205">
    <property type="entry name" value="RIBOSOMAL PROTEIN S7"/>
    <property type="match status" value="1"/>
</dbReference>
<dbReference type="Pfam" id="PF00177">
    <property type="entry name" value="Ribosomal_S7"/>
    <property type="match status" value="1"/>
</dbReference>
<dbReference type="PIRSF" id="PIRSF002122">
    <property type="entry name" value="RPS7p_RPS7a_RPS5e_RPS7o"/>
    <property type="match status" value="1"/>
</dbReference>
<dbReference type="SUPFAM" id="SSF47973">
    <property type="entry name" value="Ribosomal protein S7"/>
    <property type="match status" value="1"/>
</dbReference>
<dbReference type="PROSITE" id="PS00052">
    <property type="entry name" value="RIBOSOMAL_S7"/>
    <property type="match status" value="1"/>
</dbReference>
<proteinExistence type="inferred from homology"/>
<gene>
    <name type="primary">rps7</name>
</gene>
<name>RR7_STEPS</name>
<organism>
    <name type="scientific">Stewartia pseudocamellia</name>
    <name type="common">Japanese stewartia</name>
    <name type="synonym">Stewartia koreana</name>
    <dbReference type="NCBI Taxonomy" id="59679"/>
    <lineage>
        <taxon>Eukaryota</taxon>
        <taxon>Viridiplantae</taxon>
        <taxon>Streptophyta</taxon>
        <taxon>Embryophyta</taxon>
        <taxon>Tracheophyta</taxon>
        <taxon>Spermatophyta</taxon>
        <taxon>Magnoliopsida</taxon>
        <taxon>eudicotyledons</taxon>
        <taxon>Gunneridae</taxon>
        <taxon>Pentapetalae</taxon>
        <taxon>asterids</taxon>
        <taxon>Ericales</taxon>
        <taxon>Theaceae</taxon>
        <taxon>Stewartia</taxon>
    </lineage>
</organism>
<comment type="function">
    <text evidence="1">One of the primary rRNA binding proteins, it binds directly to 16S rRNA where it nucleates assembly of the head domain of the 30S subunit.</text>
</comment>
<comment type="subunit">
    <text>Part of the 30S ribosomal subunit.</text>
</comment>
<comment type="subcellular location">
    <subcellularLocation>
        <location>Plastid</location>
        <location>Chloroplast</location>
    </subcellularLocation>
</comment>
<comment type="similarity">
    <text evidence="2">Belongs to the universal ribosomal protein uS7 family.</text>
</comment>
<keyword id="KW-0150">Chloroplast</keyword>
<keyword id="KW-0934">Plastid</keyword>
<keyword id="KW-0687">Ribonucleoprotein</keyword>
<keyword id="KW-0689">Ribosomal protein</keyword>
<keyword id="KW-0694">RNA-binding</keyword>
<keyword id="KW-0699">rRNA-binding</keyword>